<accession>Q5HBN2</accession>
<accession>Q5FE76</accession>
<comment type="function">
    <text evidence="1">Catalyzes the synthesis of the hydroxymethylpyrimidine phosphate (HMP-P) moiety of thiamine from aminoimidazole ribotide (AIR) in a radical S-adenosyl-L-methionine (SAM)-dependent reaction.</text>
</comment>
<comment type="catalytic activity">
    <reaction evidence="1">
        <text>5-amino-1-(5-phospho-beta-D-ribosyl)imidazole + S-adenosyl-L-methionine = 4-amino-2-methyl-5-(phosphooxymethyl)pyrimidine + CO + 5'-deoxyadenosine + formate + L-methionine + 3 H(+)</text>
        <dbReference type="Rhea" id="RHEA:24840"/>
        <dbReference type="ChEBI" id="CHEBI:15378"/>
        <dbReference type="ChEBI" id="CHEBI:15740"/>
        <dbReference type="ChEBI" id="CHEBI:17245"/>
        <dbReference type="ChEBI" id="CHEBI:17319"/>
        <dbReference type="ChEBI" id="CHEBI:57844"/>
        <dbReference type="ChEBI" id="CHEBI:58354"/>
        <dbReference type="ChEBI" id="CHEBI:59789"/>
        <dbReference type="ChEBI" id="CHEBI:137981"/>
        <dbReference type="EC" id="4.1.99.17"/>
    </reaction>
</comment>
<comment type="cofactor">
    <cofactor evidence="1">
        <name>[4Fe-4S] cluster</name>
        <dbReference type="ChEBI" id="CHEBI:49883"/>
    </cofactor>
    <text evidence="1">Binds 1 [4Fe-4S] cluster per subunit. The cluster is coordinated with 3 cysteines and an exchangeable S-adenosyl-L-methionine.</text>
</comment>
<comment type="pathway">
    <text evidence="1">Cofactor biosynthesis; thiamine diphosphate biosynthesis.</text>
</comment>
<comment type="subunit">
    <text evidence="1">Homodimer.</text>
</comment>
<comment type="similarity">
    <text evidence="1">Belongs to the ThiC family.</text>
</comment>
<evidence type="ECO:0000255" key="1">
    <source>
        <dbReference type="HAMAP-Rule" id="MF_00089"/>
    </source>
</evidence>
<organism>
    <name type="scientific">Ehrlichia ruminantium (strain Welgevonden)</name>
    <dbReference type="NCBI Taxonomy" id="254945"/>
    <lineage>
        <taxon>Bacteria</taxon>
        <taxon>Pseudomonadati</taxon>
        <taxon>Pseudomonadota</taxon>
        <taxon>Alphaproteobacteria</taxon>
        <taxon>Rickettsiales</taxon>
        <taxon>Anaplasmataceae</taxon>
        <taxon>Ehrlichia</taxon>
    </lineage>
</organism>
<name>THIC_EHRRW</name>
<reference key="1">
    <citation type="journal article" date="2005" name="Proc. Natl. Acad. Sci. U.S.A.">
        <title>The genome of the heartwater agent Ehrlichia ruminantium contains multiple tandem repeats of actively variable copy number.</title>
        <authorList>
            <person name="Collins N.E."/>
            <person name="Liebenberg J."/>
            <person name="de Villiers E.P."/>
            <person name="Brayton K.A."/>
            <person name="Louw E."/>
            <person name="Pretorius A."/>
            <person name="Faber F.E."/>
            <person name="van Heerden H."/>
            <person name="Josemans A."/>
            <person name="van Kleef M."/>
            <person name="Steyn H.C."/>
            <person name="van Strijp M.F."/>
            <person name="Zweygarth E."/>
            <person name="Jongejan F."/>
            <person name="Maillard J.C."/>
            <person name="Berthier D."/>
            <person name="Botha M."/>
            <person name="Joubert F."/>
            <person name="Corton C.H."/>
            <person name="Thomson N.R."/>
            <person name="Allsopp M.T."/>
            <person name="Allsopp B.A."/>
        </authorList>
    </citation>
    <scope>NUCLEOTIDE SEQUENCE [LARGE SCALE GENOMIC DNA]</scope>
    <source>
        <strain>Welgevonden</strain>
    </source>
</reference>
<reference key="2">
    <citation type="journal article" date="2006" name="J. Bacteriol.">
        <title>Comparative genomic analysis of three strains of Ehrlichia ruminantium reveals an active process of genome size plasticity.</title>
        <authorList>
            <person name="Frutos R."/>
            <person name="Viari A."/>
            <person name="Ferraz C."/>
            <person name="Morgat A."/>
            <person name="Eychenie S."/>
            <person name="Kandassamy Y."/>
            <person name="Chantal I."/>
            <person name="Bensaid A."/>
            <person name="Coissac E."/>
            <person name="Vachiery N."/>
            <person name="Demaille J."/>
            <person name="Martinez D."/>
        </authorList>
    </citation>
    <scope>NUCLEOTIDE SEQUENCE [LARGE SCALE GENOMIC DNA]</scope>
    <source>
        <strain>Welgevonden</strain>
    </source>
</reference>
<proteinExistence type="inferred from homology"/>
<keyword id="KW-0004">4Fe-4S</keyword>
<keyword id="KW-0408">Iron</keyword>
<keyword id="KW-0411">Iron-sulfur</keyword>
<keyword id="KW-0456">Lyase</keyword>
<keyword id="KW-0479">Metal-binding</keyword>
<keyword id="KW-0949">S-adenosyl-L-methionine</keyword>
<keyword id="KW-0784">Thiamine biosynthesis</keyword>
<keyword id="KW-0862">Zinc</keyword>
<gene>
    <name evidence="1" type="primary">thiC</name>
    <name type="ordered locus">Erum2970</name>
    <name type="ordered locus">ERWE_CDS_03030</name>
</gene>
<dbReference type="EC" id="4.1.99.17" evidence="1"/>
<dbReference type="EMBL" id="CR767821">
    <property type="protein sequence ID" value="CAH58014.1"/>
    <property type="molecule type" value="Genomic_DNA"/>
</dbReference>
<dbReference type="EMBL" id="CR925678">
    <property type="protein sequence ID" value="CAI26797.1"/>
    <property type="molecule type" value="Genomic_DNA"/>
</dbReference>
<dbReference type="RefSeq" id="WP_011154979.1">
    <property type="nucleotide sequence ID" value="NC_005295.2"/>
</dbReference>
<dbReference type="SMR" id="Q5HBN2"/>
<dbReference type="GeneID" id="33057923"/>
<dbReference type="KEGG" id="eru:Erum2970"/>
<dbReference type="KEGG" id="erw:ERWE_CDS_03030"/>
<dbReference type="eggNOG" id="COG0422">
    <property type="taxonomic scope" value="Bacteria"/>
</dbReference>
<dbReference type="HOGENOM" id="CLU_013181_2_1_5"/>
<dbReference type="UniPathway" id="UPA00060"/>
<dbReference type="Proteomes" id="UP000001021">
    <property type="component" value="Chromosome"/>
</dbReference>
<dbReference type="GO" id="GO:0005829">
    <property type="term" value="C:cytosol"/>
    <property type="evidence" value="ECO:0007669"/>
    <property type="project" value="TreeGrafter"/>
</dbReference>
<dbReference type="GO" id="GO:0051539">
    <property type="term" value="F:4 iron, 4 sulfur cluster binding"/>
    <property type="evidence" value="ECO:0007669"/>
    <property type="project" value="UniProtKB-KW"/>
</dbReference>
<dbReference type="GO" id="GO:0016830">
    <property type="term" value="F:carbon-carbon lyase activity"/>
    <property type="evidence" value="ECO:0007669"/>
    <property type="project" value="InterPro"/>
</dbReference>
<dbReference type="GO" id="GO:0008270">
    <property type="term" value="F:zinc ion binding"/>
    <property type="evidence" value="ECO:0007669"/>
    <property type="project" value="UniProtKB-UniRule"/>
</dbReference>
<dbReference type="GO" id="GO:0009228">
    <property type="term" value="P:thiamine biosynthetic process"/>
    <property type="evidence" value="ECO:0007669"/>
    <property type="project" value="UniProtKB-KW"/>
</dbReference>
<dbReference type="GO" id="GO:0009229">
    <property type="term" value="P:thiamine diphosphate biosynthetic process"/>
    <property type="evidence" value="ECO:0007669"/>
    <property type="project" value="UniProtKB-UniRule"/>
</dbReference>
<dbReference type="FunFam" id="3.20.20.540:FF:000001">
    <property type="entry name" value="Phosphomethylpyrimidine synthase"/>
    <property type="match status" value="1"/>
</dbReference>
<dbReference type="Gene3D" id="6.10.250.620">
    <property type="match status" value="1"/>
</dbReference>
<dbReference type="Gene3D" id="3.20.20.540">
    <property type="entry name" value="Radical SAM ThiC family, central domain"/>
    <property type="match status" value="1"/>
</dbReference>
<dbReference type="HAMAP" id="MF_00089">
    <property type="entry name" value="ThiC"/>
    <property type="match status" value="1"/>
</dbReference>
<dbReference type="InterPro" id="IPR037509">
    <property type="entry name" value="ThiC"/>
</dbReference>
<dbReference type="InterPro" id="IPR025747">
    <property type="entry name" value="ThiC-associated_dom"/>
</dbReference>
<dbReference type="InterPro" id="IPR038521">
    <property type="entry name" value="ThiC/Bza_core_dom"/>
</dbReference>
<dbReference type="InterPro" id="IPR002817">
    <property type="entry name" value="ThiC/BzaA/B"/>
</dbReference>
<dbReference type="NCBIfam" id="NF006763">
    <property type="entry name" value="PRK09284.1"/>
    <property type="match status" value="1"/>
</dbReference>
<dbReference type="NCBIfam" id="NF009895">
    <property type="entry name" value="PRK13352.1"/>
    <property type="match status" value="1"/>
</dbReference>
<dbReference type="NCBIfam" id="TIGR00190">
    <property type="entry name" value="thiC"/>
    <property type="match status" value="1"/>
</dbReference>
<dbReference type="PANTHER" id="PTHR30557:SF1">
    <property type="entry name" value="PHOSPHOMETHYLPYRIMIDINE SYNTHASE, CHLOROPLASTIC"/>
    <property type="match status" value="1"/>
</dbReference>
<dbReference type="PANTHER" id="PTHR30557">
    <property type="entry name" value="THIAMINE BIOSYNTHESIS PROTEIN THIC"/>
    <property type="match status" value="1"/>
</dbReference>
<dbReference type="Pfam" id="PF13667">
    <property type="entry name" value="ThiC-associated"/>
    <property type="match status" value="1"/>
</dbReference>
<dbReference type="Pfam" id="PF01964">
    <property type="entry name" value="ThiC_Rad_SAM"/>
    <property type="match status" value="1"/>
</dbReference>
<dbReference type="SFLD" id="SFLDF00407">
    <property type="entry name" value="phosphomethylpyrimidine_syntha"/>
    <property type="match status" value="1"/>
</dbReference>
<dbReference type="SFLD" id="SFLDG01114">
    <property type="entry name" value="phosphomethylpyrimidine_syntha"/>
    <property type="match status" value="1"/>
</dbReference>
<dbReference type="SFLD" id="SFLDS00113">
    <property type="entry name" value="Radical_SAM_Phosphomethylpyrim"/>
    <property type="match status" value="1"/>
</dbReference>
<protein>
    <recommendedName>
        <fullName evidence="1">Phosphomethylpyrimidine synthase</fullName>
        <ecNumber evidence="1">4.1.99.17</ecNumber>
    </recommendedName>
    <alternativeName>
        <fullName evidence="1">Hydroxymethylpyrimidine phosphate synthase</fullName>
        <shortName evidence="1">HMP-P synthase</shortName>
        <shortName evidence="1">HMP-phosphate synthase</shortName>
        <shortName evidence="1">HMPP synthase</shortName>
    </alternativeName>
    <alternativeName>
        <fullName evidence="1">Thiamine biosynthesis protein ThiC</fullName>
    </alternativeName>
</protein>
<feature type="chain" id="PRO_0000242261" description="Phosphomethylpyrimidine synthase">
    <location>
        <begin position="1"/>
        <end position="555"/>
    </location>
</feature>
<feature type="binding site" evidence="1">
    <location>
        <position position="191"/>
    </location>
    <ligand>
        <name>substrate</name>
    </ligand>
</feature>
<feature type="binding site" evidence="1">
    <location>
        <position position="220"/>
    </location>
    <ligand>
        <name>substrate</name>
    </ligand>
</feature>
<feature type="binding site" evidence="1">
    <location>
        <position position="249"/>
    </location>
    <ligand>
        <name>substrate</name>
    </ligand>
</feature>
<feature type="binding site" evidence="1">
    <location>
        <position position="285"/>
    </location>
    <ligand>
        <name>substrate</name>
    </ligand>
</feature>
<feature type="binding site" evidence="1">
    <location>
        <begin position="305"/>
        <end position="307"/>
    </location>
    <ligand>
        <name>substrate</name>
    </ligand>
</feature>
<feature type="binding site" evidence="1">
    <location>
        <begin position="346"/>
        <end position="349"/>
    </location>
    <ligand>
        <name>substrate</name>
    </ligand>
</feature>
<feature type="binding site" evidence="1">
    <location>
        <position position="385"/>
    </location>
    <ligand>
        <name>substrate</name>
    </ligand>
</feature>
<feature type="binding site" evidence="1">
    <location>
        <position position="389"/>
    </location>
    <ligand>
        <name>Zn(2+)</name>
        <dbReference type="ChEBI" id="CHEBI:29105"/>
    </ligand>
</feature>
<feature type="binding site" evidence="1">
    <location>
        <position position="412"/>
    </location>
    <ligand>
        <name>substrate</name>
    </ligand>
</feature>
<feature type="binding site" evidence="1">
    <location>
        <position position="453"/>
    </location>
    <ligand>
        <name>Zn(2+)</name>
        <dbReference type="ChEBI" id="CHEBI:29105"/>
    </ligand>
</feature>
<feature type="binding site" evidence="1">
    <location>
        <position position="533"/>
    </location>
    <ligand>
        <name>[4Fe-4S] cluster</name>
        <dbReference type="ChEBI" id="CHEBI:49883"/>
        <note>4Fe-4S-S-AdoMet</note>
    </ligand>
</feature>
<feature type="binding site" evidence="1">
    <location>
        <position position="536"/>
    </location>
    <ligand>
        <name>[4Fe-4S] cluster</name>
        <dbReference type="ChEBI" id="CHEBI:49883"/>
        <note>4Fe-4S-S-AdoMet</note>
    </ligand>
</feature>
<feature type="binding site" evidence="1">
    <location>
        <position position="541"/>
    </location>
    <ligand>
        <name>[4Fe-4S] cluster</name>
        <dbReference type="ChEBI" id="CHEBI:49883"/>
        <note>4Fe-4S-S-AdoMet</note>
    </ligand>
</feature>
<sequence length="555" mass="62389">MKIDLNTIFPSSRKEYIPGKIYKNIKIGMRKVSFNNDTESIFIYDTGGPHSDQDIQTNINNGIKKLRLNWITDRQDVEYYDRHTINTNSSTAFPLQNNKALKSKSDKPVTQMFYAKNNIITPEMEYVAIRENSLIQKLLSHTPNTIIPEITPELVRQEVAAGRAIIPANINHPESEPMIIGKNFLVKINANIGNSAVSSDINNEVHKMIYAIIYGADTVMDLSTGSHIHNTREWIIRNSPVPIGTVPIYQALNKVNGIVGELDFNIFKETLIEQAEQGVDYFTIHAGVLKKYIQYTTNRLTGIVSRGGAIIAQWCSIHNKENFLYTNFEEICDIMKSYDIAFSLGDGLRPGSIADANDKAQFLELKTLGELTDIAWKHDCQVMIEGPGHVPMHLIKENVEKQIYFCKEAPFYTLGPLTTDIAPGYDHITSAIGAAMIGWYGTSMLCYVTPKEHLGLPNLNDVKNGVITYKIAAHAADLAKGNPSAYIRDYALSHARFNFRWYDQFNLSLDPETAKSFHDESLPSEHAKSAHFCSMCGPKFCSMKLTHQLQLNSTE</sequence>